<sequence length="214" mass="24282">MVDEDRITLAPTEIYGRSDEEQSGPRIWRRKTEEPPGKCLVYSLTIIVIIFALCLILSSIFLRISKPEIETRSISTRDLRSGGNSTNPYFNATLVSDISIRNSNFGAFEFEDSTLRVVYADHGVVGETKIEGRRVEAHKTVRITGVVVEIGSFRLLDTKDLDKDLRLGFLELRSVAEVRGRIKVLGRKRWKVSVMSCTMRLNLTGRFIQNLLCE</sequence>
<gene>
    <name evidence="3" type="ordered locus">At1g64065</name>
</gene>
<reference key="1">
    <citation type="journal article" date="2000" name="Nature">
        <title>Sequence and analysis of chromosome 1 of the plant Arabidopsis thaliana.</title>
        <authorList>
            <person name="Theologis A."/>
            <person name="Ecker J.R."/>
            <person name="Palm C.J."/>
            <person name="Federspiel N.A."/>
            <person name="Kaul S."/>
            <person name="White O."/>
            <person name="Alonso J."/>
            <person name="Altafi H."/>
            <person name="Araujo R."/>
            <person name="Bowman C.L."/>
            <person name="Brooks S.Y."/>
            <person name="Buehler E."/>
            <person name="Chan A."/>
            <person name="Chao Q."/>
            <person name="Chen H."/>
            <person name="Cheuk R.F."/>
            <person name="Chin C.W."/>
            <person name="Chung M.K."/>
            <person name="Conn L."/>
            <person name="Conway A.B."/>
            <person name="Conway A.R."/>
            <person name="Creasy T.H."/>
            <person name="Dewar K."/>
            <person name="Dunn P."/>
            <person name="Etgu P."/>
            <person name="Feldblyum T.V."/>
            <person name="Feng J.-D."/>
            <person name="Fong B."/>
            <person name="Fujii C.Y."/>
            <person name="Gill J.E."/>
            <person name="Goldsmith A.D."/>
            <person name="Haas B."/>
            <person name="Hansen N.F."/>
            <person name="Hughes B."/>
            <person name="Huizar L."/>
            <person name="Hunter J.L."/>
            <person name="Jenkins J."/>
            <person name="Johnson-Hopson C."/>
            <person name="Khan S."/>
            <person name="Khaykin E."/>
            <person name="Kim C.J."/>
            <person name="Koo H.L."/>
            <person name="Kremenetskaia I."/>
            <person name="Kurtz D.B."/>
            <person name="Kwan A."/>
            <person name="Lam B."/>
            <person name="Langin-Hooper S."/>
            <person name="Lee A."/>
            <person name="Lee J.M."/>
            <person name="Lenz C.A."/>
            <person name="Li J.H."/>
            <person name="Li Y.-P."/>
            <person name="Lin X."/>
            <person name="Liu S.X."/>
            <person name="Liu Z.A."/>
            <person name="Luros J.S."/>
            <person name="Maiti R."/>
            <person name="Marziali A."/>
            <person name="Militscher J."/>
            <person name="Miranda M."/>
            <person name="Nguyen M."/>
            <person name="Nierman W.C."/>
            <person name="Osborne B.I."/>
            <person name="Pai G."/>
            <person name="Peterson J."/>
            <person name="Pham P.K."/>
            <person name="Rizzo M."/>
            <person name="Rooney T."/>
            <person name="Rowley D."/>
            <person name="Sakano H."/>
            <person name="Salzberg S.L."/>
            <person name="Schwartz J.R."/>
            <person name="Shinn P."/>
            <person name="Southwick A.M."/>
            <person name="Sun H."/>
            <person name="Tallon L.J."/>
            <person name="Tambunga G."/>
            <person name="Toriumi M.J."/>
            <person name="Town C.D."/>
            <person name="Utterback T."/>
            <person name="Van Aken S."/>
            <person name="Vaysberg M."/>
            <person name="Vysotskaia V.S."/>
            <person name="Walker M."/>
            <person name="Wu D."/>
            <person name="Yu G."/>
            <person name="Fraser C.M."/>
            <person name="Venter J.C."/>
            <person name="Davis R.W."/>
        </authorList>
    </citation>
    <scope>NUCLEOTIDE SEQUENCE [LARGE SCALE GENOMIC DNA]</scope>
    <source>
        <strain>cv. Columbia</strain>
    </source>
</reference>
<reference key="2">
    <citation type="journal article" date="2017" name="Plant J.">
        <title>Araport11: a complete reannotation of the Arabidopsis thaliana reference genome.</title>
        <authorList>
            <person name="Cheng C.Y."/>
            <person name="Krishnakumar V."/>
            <person name="Chan A.P."/>
            <person name="Thibaud-Nissen F."/>
            <person name="Schobel S."/>
            <person name="Town C.D."/>
        </authorList>
    </citation>
    <scope>GENOME REANNOTATION</scope>
    <source>
        <strain>cv. Columbia</strain>
    </source>
</reference>
<reference key="3">
    <citation type="submission" date="2004-10" db="EMBL/GenBank/DDBJ databases">
        <authorList>
            <person name="Underwood B.A."/>
            <person name="Xiao Y.-L."/>
            <person name="Moskal W.A. Jr."/>
            <person name="Monaghan E.L."/>
            <person name="Wang W."/>
            <person name="Redman J.C."/>
            <person name="Wu H.C."/>
            <person name="Utterback T."/>
            <person name="Town C.D."/>
        </authorList>
    </citation>
    <scope>NUCLEOTIDE SEQUENCE [LARGE SCALE GENOMIC DNA / MRNA]</scope>
    <source>
        <strain>cv. Columbia</strain>
    </source>
</reference>
<name>Y1465_ARATH</name>
<keyword id="KW-0472">Membrane</keyword>
<keyword id="KW-1185">Reference proteome</keyword>
<keyword id="KW-0812">Transmembrane</keyword>
<keyword id="KW-1133">Transmembrane helix</keyword>
<dbReference type="EMBL" id="AC007764">
    <property type="protein sequence ID" value="AAF24575.1"/>
    <property type="status" value="ALT_SEQ"/>
    <property type="molecule type" value="Genomic_DNA"/>
</dbReference>
<dbReference type="EMBL" id="CP002684">
    <property type="protein sequence ID" value="AEE34187.1"/>
    <property type="molecule type" value="Genomic_DNA"/>
</dbReference>
<dbReference type="EMBL" id="AY648317">
    <property type="protein sequence ID" value="AAT68728.1"/>
    <property type="molecule type" value="mRNA"/>
</dbReference>
<dbReference type="EMBL" id="AY773828">
    <property type="protein sequence ID" value="AAV63857.1"/>
    <property type="molecule type" value="Genomic_DNA"/>
</dbReference>
<dbReference type="RefSeq" id="NP_974086.1">
    <property type="nucleotide sequence ID" value="NM_202357.3"/>
</dbReference>
<dbReference type="SMR" id="Q6DST1"/>
<dbReference type="FunCoup" id="Q6DST1">
    <property type="interactions" value="3"/>
</dbReference>
<dbReference type="STRING" id="3702.Q6DST1"/>
<dbReference type="PaxDb" id="3702-AT1G64065.1"/>
<dbReference type="ProteomicsDB" id="243051"/>
<dbReference type="EnsemblPlants" id="AT1G64065.1">
    <property type="protein sequence ID" value="AT1G64065.1"/>
    <property type="gene ID" value="AT1G64065"/>
</dbReference>
<dbReference type="GeneID" id="2745848"/>
<dbReference type="Gramene" id="AT1G64065.1">
    <property type="protein sequence ID" value="AT1G64065.1"/>
    <property type="gene ID" value="AT1G64065"/>
</dbReference>
<dbReference type="KEGG" id="ath:AT1G64065"/>
<dbReference type="Araport" id="AT1G64065"/>
<dbReference type="TAIR" id="AT1G64065"/>
<dbReference type="eggNOG" id="ENOG502S144">
    <property type="taxonomic scope" value="Eukaryota"/>
</dbReference>
<dbReference type="HOGENOM" id="CLU_050605_2_0_1"/>
<dbReference type="InParanoid" id="Q6DST1"/>
<dbReference type="OMA" id="SDINSRM"/>
<dbReference type="PhylomeDB" id="Q6DST1"/>
<dbReference type="PRO" id="PR:Q6DST1"/>
<dbReference type="Proteomes" id="UP000006548">
    <property type="component" value="Chromosome 1"/>
</dbReference>
<dbReference type="ExpressionAtlas" id="Q6DST1">
    <property type="expression patterns" value="baseline and differential"/>
</dbReference>
<dbReference type="GO" id="GO:0016020">
    <property type="term" value="C:membrane"/>
    <property type="evidence" value="ECO:0007669"/>
    <property type="project" value="UniProtKB-SubCell"/>
</dbReference>
<dbReference type="GO" id="GO:0098542">
    <property type="term" value="P:defense response to other organism"/>
    <property type="evidence" value="ECO:0007669"/>
    <property type="project" value="InterPro"/>
</dbReference>
<dbReference type="InterPro" id="IPR044839">
    <property type="entry name" value="NDR1-like"/>
</dbReference>
<dbReference type="PANTHER" id="PTHR31234">
    <property type="entry name" value="LATE EMBRYOGENESIS ABUNDANT (LEA) HYDROXYPROLINE-RICH GLYCOPROTEIN FAMILY"/>
    <property type="match status" value="1"/>
</dbReference>
<dbReference type="PANTHER" id="PTHR31234:SF38">
    <property type="entry name" value="LATE EMBRYOGENESIS ABUNDANT PROTEIN LEA-2 SUBGROUP DOMAIN-CONTAINING PROTEIN"/>
    <property type="match status" value="1"/>
</dbReference>
<feature type="chain" id="PRO_0000433385" description="Late embryogenesis abundant protein At1g64065">
    <location>
        <begin position="1"/>
        <end position="214"/>
    </location>
</feature>
<feature type="transmembrane region" description="Helical" evidence="1">
    <location>
        <begin position="41"/>
        <end position="61"/>
    </location>
</feature>
<comment type="subcellular location">
    <subcellularLocation>
        <location evidence="1">Membrane</location>
        <topology evidence="1">Single-pass membrane protein</topology>
    </subcellularLocation>
</comment>
<comment type="similarity">
    <text evidence="2">Belongs to the LEA type 2 family.</text>
</comment>
<comment type="sequence caution" evidence="2">
    <conflict type="erroneous gene model prediction">
        <sequence resource="EMBL-CDS" id="AAF24575"/>
    </conflict>
    <text>The predicted gene has been split into 2 genes: At1g64065 and At1g64070.</text>
</comment>
<protein>
    <recommendedName>
        <fullName evidence="2">Late embryogenesis abundant protein At1g64065</fullName>
    </recommendedName>
</protein>
<organism>
    <name type="scientific">Arabidopsis thaliana</name>
    <name type="common">Mouse-ear cress</name>
    <dbReference type="NCBI Taxonomy" id="3702"/>
    <lineage>
        <taxon>Eukaryota</taxon>
        <taxon>Viridiplantae</taxon>
        <taxon>Streptophyta</taxon>
        <taxon>Embryophyta</taxon>
        <taxon>Tracheophyta</taxon>
        <taxon>Spermatophyta</taxon>
        <taxon>Magnoliopsida</taxon>
        <taxon>eudicotyledons</taxon>
        <taxon>Gunneridae</taxon>
        <taxon>Pentapetalae</taxon>
        <taxon>rosids</taxon>
        <taxon>malvids</taxon>
        <taxon>Brassicales</taxon>
        <taxon>Brassicaceae</taxon>
        <taxon>Camelineae</taxon>
        <taxon>Arabidopsis</taxon>
    </lineage>
</organism>
<accession>Q6DST1</accession>
<accession>Q9SH57</accession>
<proteinExistence type="evidence at transcript level"/>
<evidence type="ECO:0000255" key="1"/>
<evidence type="ECO:0000305" key="2"/>
<evidence type="ECO:0000312" key="3">
    <source>
        <dbReference type="Araport" id="AT1G64065"/>
    </source>
</evidence>